<name>TRHO_ONYPE</name>
<gene>
    <name evidence="1" type="primary">trhO</name>
    <name type="ordered locus">PAM_085</name>
</gene>
<dbReference type="EC" id="1.14.-.-" evidence="1"/>
<dbReference type="EMBL" id="AP006628">
    <property type="protein sequence ID" value="BAD04170.1"/>
    <property type="status" value="ALT_INIT"/>
    <property type="molecule type" value="Genomic_DNA"/>
</dbReference>
<dbReference type="SMR" id="Q6YRD0"/>
<dbReference type="STRING" id="262768.PAM_085"/>
<dbReference type="KEGG" id="poy:PAM_085"/>
<dbReference type="eggNOG" id="COG1054">
    <property type="taxonomic scope" value="Bacteria"/>
</dbReference>
<dbReference type="HOGENOM" id="CLU_038878_1_0_14"/>
<dbReference type="BioCyc" id="OYEL262768:G1G26-114-MONOMER"/>
<dbReference type="Proteomes" id="UP000002523">
    <property type="component" value="Chromosome"/>
</dbReference>
<dbReference type="GO" id="GO:0016705">
    <property type="term" value="F:oxidoreductase activity, acting on paired donors, with incorporation or reduction of molecular oxygen"/>
    <property type="evidence" value="ECO:0007669"/>
    <property type="project" value="UniProtKB-UniRule"/>
</dbReference>
<dbReference type="GO" id="GO:0006400">
    <property type="term" value="P:tRNA modification"/>
    <property type="evidence" value="ECO:0007669"/>
    <property type="project" value="UniProtKB-UniRule"/>
</dbReference>
<dbReference type="CDD" id="cd01518">
    <property type="entry name" value="RHOD_YceA"/>
    <property type="match status" value="1"/>
</dbReference>
<dbReference type="Gene3D" id="3.30.70.100">
    <property type="match status" value="1"/>
</dbReference>
<dbReference type="Gene3D" id="3.40.250.10">
    <property type="entry name" value="Rhodanese-like domain"/>
    <property type="match status" value="1"/>
</dbReference>
<dbReference type="HAMAP" id="MF_00469">
    <property type="entry name" value="TrhO"/>
    <property type="match status" value="1"/>
</dbReference>
<dbReference type="InterPro" id="IPR001763">
    <property type="entry name" value="Rhodanese-like_dom"/>
</dbReference>
<dbReference type="InterPro" id="IPR036873">
    <property type="entry name" value="Rhodanese-like_dom_sf"/>
</dbReference>
<dbReference type="InterPro" id="IPR022111">
    <property type="entry name" value="Rhodanese_C"/>
</dbReference>
<dbReference type="InterPro" id="IPR020936">
    <property type="entry name" value="TrhO"/>
</dbReference>
<dbReference type="InterPro" id="IPR040503">
    <property type="entry name" value="TRHO_N"/>
</dbReference>
<dbReference type="NCBIfam" id="NF001135">
    <property type="entry name" value="PRK00142.1-3"/>
    <property type="match status" value="1"/>
</dbReference>
<dbReference type="PANTHER" id="PTHR43268:SF3">
    <property type="entry name" value="RHODANESE-LIKE DOMAIN-CONTAINING PROTEIN 7-RELATED"/>
    <property type="match status" value="1"/>
</dbReference>
<dbReference type="PANTHER" id="PTHR43268">
    <property type="entry name" value="THIOSULFATE SULFURTRANSFERASE/RHODANESE-LIKE DOMAIN-CONTAINING PROTEIN 2"/>
    <property type="match status" value="1"/>
</dbReference>
<dbReference type="Pfam" id="PF00581">
    <property type="entry name" value="Rhodanese"/>
    <property type="match status" value="1"/>
</dbReference>
<dbReference type="Pfam" id="PF12368">
    <property type="entry name" value="Rhodanese_C"/>
    <property type="match status" value="1"/>
</dbReference>
<dbReference type="Pfam" id="PF17773">
    <property type="entry name" value="UPF0176_N"/>
    <property type="match status" value="1"/>
</dbReference>
<dbReference type="SMART" id="SM00450">
    <property type="entry name" value="RHOD"/>
    <property type="match status" value="1"/>
</dbReference>
<dbReference type="SUPFAM" id="SSF52821">
    <property type="entry name" value="Rhodanese/Cell cycle control phosphatase"/>
    <property type="match status" value="1"/>
</dbReference>
<dbReference type="PROSITE" id="PS50206">
    <property type="entry name" value="RHODANESE_3"/>
    <property type="match status" value="1"/>
</dbReference>
<keyword id="KW-0560">Oxidoreductase</keyword>
<keyword id="KW-0819">tRNA processing</keyword>
<sequence>MTQTSNSQYLVILYYQYAPIKDPQTFRDQHFKYCESIGLLGRIIVAQEGINGTLSGPEEQIHKYMDQLKQDPRFCNTVFKMETVEAHVFPRLSIKVKPELVNLSLQENVDLTKDKGAYLAPQEFLQALQEKDTLILDARNDYEYDLGHFRNAVNPNIRHFRDLPNWVKQNTHLLKDKKIVTYCTGGVRCEKFSTFLKKEGFDDVYQLEGGIISYGKHPETQGALWDGQMYVFDQRIAVPVNQKEHVIVGKDYFDGTPCERYINCSNPQCNKQILCHEYNEHKYLGACSDKCSNHPQNRYLKKHNNPNS</sequence>
<organism>
    <name type="scientific">Onion yellows phytoplasma (strain OY-M)</name>
    <dbReference type="NCBI Taxonomy" id="262768"/>
    <lineage>
        <taxon>Bacteria</taxon>
        <taxon>Bacillati</taxon>
        <taxon>Mycoplasmatota</taxon>
        <taxon>Mollicutes</taxon>
        <taxon>Acholeplasmatales</taxon>
        <taxon>Acholeplasmataceae</taxon>
        <taxon>Candidatus Phytoplasma</taxon>
        <taxon>16SrI (Aster yellows group)</taxon>
    </lineage>
</organism>
<reference key="1">
    <citation type="journal article" date="2004" name="Nat. Genet.">
        <title>Reductive evolution suggested from the complete genome sequence of a plant-pathogenic phytoplasma.</title>
        <authorList>
            <person name="Oshima K."/>
            <person name="Kakizawa S."/>
            <person name="Nishigawa H."/>
            <person name="Jung H.-Y."/>
            <person name="Wei W."/>
            <person name="Suzuki S."/>
            <person name="Arashida R."/>
            <person name="Nakata D."/>
            <person name="Miyata S."/>
            <person name="Ugaki M."/>
            <person name="Namba S."/>
        </authorList>
    </citation>
    <scope>NUCLEOTIDE SEQUENCE [LARGE SCALE GENOMIC DNA]</scope>
    <source>
        <strain>OY-M</strain>
    </source>
</reference>
<proteinExistence type="inferred from homology"/>
<feature type="chain" id="PRO_0000161490" description="tRNA uridine(34) hydroxylase">
    <location>
        <begin position="1"/>
        <end position="308"/>
    </location>
</feature>
<feature type="domain" description="Rhodanese" evidence="1">
    <location>
        <begin position="129"/>
        <end position="223"/>
    </location>
</feature>
<feature type="active site" description="Cysteine persulfide intermediate" evidence="1">
    <location>
        <position position="183"/>
    </location>
</feature>
<accession>Q6YRD0</accession>
<evidence type="ECO:0000255" key="1">
    <source>
        <dbReference type="HAMAP-Rule" id="MF_00469"/>
    </source>
</evidence>
<evidence type="ECO:0000305" key="2"/>
<comment type="function">
    <text evidence="1">Catalyzes oxygen-dependent 5-hydroxyuridine (ho5U) modification at position 34 in tRNAs.</text>
</comment>
<comment type="catalytic activity">
    <reaction evidence="1">
        <text>uridine(34) in tRNA + AH2 + O2 = 5-hydroxyuridine(34) in tRNA + A + H2O</text>
        <dbReference type="Rhea" id="RHEA:64224"/>
        <dbReference type="Rhea" id="RHEA-COMP:11727"/>
        <dbReference type="Rhea" id="RHEA-COMP:13381"/>
        <dbReference type="ChEBI" id="CHEBI:13193"/>
        <dbReference type="ChEBI" id="CHEBI:15377"/>
        <dbReference type="ChEBI" id="CHEBI:15379"/>
        <dbReference type="ChEBI" id="CHEBI:17499"/>
        <dbReference type="ChEBI" id="CHEBI:65315"/>
        <dbReference type="ChEBI" id="CHEBI:136877"/>
    </reaction>
</comment>
<comment type="similarity">
    <text evidence="1">Belongs to the TrhO family.</text>
</comment>
<comment type="sequence caution" evidence="2">
    <conflict type="erroneous initiation">
        <sequence resource="EMBL-CDS" id="BAD04170"/>
    </conflict>
</comment>
<protein>
    <recommendedName>
        <fullName evidence="1">tRNA uridine(34) hydroxylase</fullName>
        <ecNumber evidence="1">1.14.-.-</ecNumber>
    </recommendedName>
    <alternativeName>
        <fullName evidence="1">tRNA hydroxylation protein O</fullName>
    </alternativeName>
</protein>